<reference key="1">
    <citation type="journal article" date="2007" name="PLoS Genet.">
        <title>A tale of two oxidation states: bacterial colonization of arsenic-rich environments.</title>
        <authorList>
            <person name="Muller D."/>
            <person name="Medigue C."/>
            <person name="Koechler S."/>
            <person name="Barbe V."/>
            <person name="Barakat M."/>
            <person name="Talla E."/>
            <person name="Bonnefoy V."/>
            <person name="Krin E."/>
            <person name="Arsene-Ploetze F."/>
            <person name="Carapito C."/>
            <person name="Chandler M."/>
            <person name="Cournoyer B."/>
            <person name="Cruveiller S."/>
            <person name="Dossat C."/>
            <person name="Duval S."/>
            <person name="Heymann M."/>
            <person name="Leize E."/>
            <person name="Lieutaud A."/>
            <person name="Lievremont D."/>
            <person name="Makita Y."/>
            <person name="Mangenot S."/>
            <person name="Nitschke W."/>
            <person name="Ortet P."/>
            <person name="Perdrial N."/>
            <person name="Schoepp B."/>
            <person name="Siguier P."/>
            <person name="Simeonova D.D."/>
            <person name="Rouy Z."/>
            <person name="Segurens B."/>
            <person name="Turlin E."/>
            <person name="Vallenet D."/>
            <person name="van Dorsselaer A."/>
            <person name="Weiss S."/>
            <person name="Weissenbach J."/>
            <person name="Lett M.-C."/>
            <person name="Danchin A."/>
            <person name="Bertin P.N."/>
        </authorList>
    </citation>
    <scope>NUCLEOTIDE SEQUENCE [LARGE SCALE GENOMIC DNA]</scope>
    <source>
        <strain>ULPAs1</strain>
    </source>
</reference>
<protein>
    <recommendedName>
        <fullName evidence="1">UDP-N-acetylglucosamine--N-acetylmuramyl-(pentapeptide) pyrophosphoryl-undecaprenol N-acetylglucosamine transferase</fullName>
        <ecNumber evidence="1">2.4.1.227</ecNumber>
    </recommendedName>
    <alternativeName>
        <fullName evidence="1">Undecaprenyl-PP-MurNAc-pentapeptide-UDPGlcNAc GlcNAc transferase</fullName>
    </alternativeName>
</protein>
<sequence>MKKLLIMAAGTGGHIFPGLAIADTMQARGWEVTWLGTEHGMERDLVPKSGIAMDTISFAGLRGKGLRHTVTGVLRLLASFGTCFSILARRKPGVVLGMGGYVTVPGGWMAKLRGVPLVLLNADAALLLSNKALTPIAQRVLFGFPADFGNAADKALVTGNPVRAEISALMPPAQRYAQHSGALKILVVGGSLGAQALNAALPAALALIPAEQRPLVTHQSGKKNIDDLRARYAQAGVTAEVVDFIDDMPRRYADADLVICRAGAITVSELTAAGVASVLVPLLVSTTTHQRDNAHWMEQQQAAIHLPQSELTAQGLADLLQNMTREKCKQMAEAAYANGRRDANAAIADVLEKLVKNT</sequence>
<comment type="function">
    <text evidence="1">Cell wall formation. Catalyzes the transfer of a GlcNAc subunit on undecaprenyl-pyrophosphoryl-MurNAc-pentapeptide (lipid intermediate I) to form undecaprenyl-pyrophosphoryl-MurNAc-(pentapeptide)GlcNAc (lipid intermediate II).</text>
</comment>
<comment type="catalytic activity">
    <reaction evidence="1">
        <text>di-trans,octa-cis-undecaprenyl diphospho-N-acetyl-alpha-D-muramoyl-L-alanyl-D-glutamyl-meso-2,6-diaminopimeloyl-D-alanyl-D-alanine + UDP-N-acetyl-alpha-D-glucosamine = di-trans,octa-cis-undecaprenyl diphospho-[N-acetyl-alpha-D-glucosaminyl-(1-&gt;4)]-N-acetyl-alpha-D-muramoyl-L-alanyl-D-glutamyl-meso-2,6-diaminopimeloyl-D-alanyl-D-alanine + UDP + H(+)</text>
        <dbReference type="Rhea" id="RHEA:31227"/>
        <dbReference type="ChEBI" id="CHEBI:15378"/>
        <dbReference type="ChEBI" id="CHEBI:57705"/>
        <dbReference type="ChEBI" id="CHEBI:58223"/>
        <dbReference type="ChEBI" id="CHEBI:61387"/>
        <dbReference type="ChEBI" id="CHEBI:61388"/>
        <dbReference type="EC" id="2.4.1.227"/>
    </reaction>
</comment>
<comment type="pathway">
    <text evidence="1">Cell wall biogenesis; peptidoglycan biosynthesis.</text>
</comment>
<comment type="subcellular location">
    <subcellularLocation>
        <location evidence="1">Cell inner membrane</location>
        <topology evidence="1">Peripheral membrane protein</topology>
        <orientation evidence="1">Cytoplasmic side</orientation>
    </subcellularLocation>
</comment>
<comment type="similarity">
    <text evidence="1">Belongs to the glycosyltransferase 28 family. MurG subfamily.</text>
</comment>
<evidence type="ECO:0000255" key="1">
    <source>
        <dbReference type="HAMAP-Rule" id="MF_00033"/>
    </source>
</evidence>
<proteinExistence type="inferred from homology"/>
<dbReference type="EC" id="2.4.1.227" evidence="1"/>
<dbReference type="EMBL" id="CU207211">
    <property type="protein sequence ID" value="CAL62925.1"/>
    <property type="molecule type" value="Genomic_DNA"/>
</dbReference>
<dbReference type="SMR" id="A4G8T8"/>
<dbReference type="STRING" id="204773.HEAR2811"/>
<dbReference type="CAZy" id="GT28">
    <property type="family name" value="Glycosyltransferase Family 28"/>
</dbReference>
<dbReference type="KEGG" id="har:HEAR2811"/>
<dbReference type="eggNOG" id="COG0707">
    <property type="taxonomic scope" value="Bacteria"/>
</dbReference>
<dbReference type="HOGENOM" id="CLU_037404_2_0_4"/>
<dbReference type="OrthoDB" id="9808936at2"/>
<dbReference type="UniPathway" id="UPA00219"/>
<dbReference type="Proteomes" id="UP000006697">
    <property type="component" value="Chromosome"/>
</dbReference>
<dbReference type="GO" id="GO:0005886">
    <property type="term" value="C:plasma membrane"/>
    <property type="evidence" value="ECO:0007669"/>
    <property type="project" value="UniProtKB-SubCell"/>
</dbReference>
<dbReference type="GO" id="GO:0051991">
    <property type="term" value="F:UDP-N-acetyl-D-glucosamine:N-acetylmuramoyl-L-alanyl-D-glutamyl-meso-2,6-diaminopimelyl-D-alanyl-D-alanine-diphosphoundecaprenol 4-beta-N-acetylglucosaminlytransferase activity"/>
    <property type="evidence" value="ECO:0007669"/>
    <property type="project" value="RHEA"/>
</dbReference>
<dbReference type="GO" id="GO:0050511">
    <property type="term" value="F:undecaprenyldiphospho-muramoylpentapeptide beta-N-acetylglucosaminyltransferase activity"/>
    <property type="evidence" value="ECO:0007669"/>
    <property type="project" value="UniProtKB-UniRule"/>
</dbReference>
<dbReference type="GO" id="GO:0005975">
    <property type="term" value="P:carbohydrate metabolic process"/>
    <property type="evidence" value="ECO:0007669"/>
    <property type="project" value="InterPro"/>
</dbReference>
<dbReference type="GO" id="GO:0051301">
    <property type="term" value="P:cell division"/>
    <property type="evidence" value="ECO:0007669"/>
    <property type="project" value="UniProtKB-KW"/>
</dbReference>
<dbReference type="GO" id="GO:0071555">
    <property type="term" value="P:cell wall organization"/>
    <property type="evidence" value="ECO:0007669"/>
    <property type="project" value="UniProtKB-KW"/>
</dbReference>
<dbReference type="GO" id="GO:0030259">
    <property type="term" value="P:lipid glycosylation"/>
    <property type="evidence" value="ECO:0007669"/>
    <property type="project" value="UniProtKB-UniRule"/>
</dbReference>
<dbReference type="GO" id="GO:0009252">
    <property type="term" value="P:peptidoglycan biosynthetic process"/>
    <property type="evidence" value="ECO:0007669"/>
    <property type="project" value="UniProtKB-UniRule"/>
</dbReference>
<dbReference type="GO" id="GO:0008360">
    <property type="term" value="P:regulation of cell shape"/>
    <property type="evidence" value="ECO:0007669"/>
    <property type="project" value="UniProtKB-KW"/>
</dbReference>
<dbReference type="CDD" id="cd03785">
    <property type="entry name" value="GT28_MurG"/>
    <property type="match status" value="1"/>
</dbReference>
<dbReference type="Gene3D" id="3.40.50.2000">
    <property type="entry name" value="Glycogen Phosphorylase B"/>
    <property type="match status" value="2"/>
</dbReference>
<dbReference type="HAMAP" id="MF_00033">
    <property type="entry name" value="MurG"/>
    <property type="match status" value="1"/>
</dbReference>
<dbReference type="InterPro" id="IPR006009">
    <property type="entry name" value="GlcNAc_MurG"/>
</dbReference>
<dbReference type="InterPro" id="IPR007235">
    <property type="entry name" value="Glyco_trans_28_C"/>
</dbReference>
<dbReference type="InterPro" id="IPR004276">
    <property type="entry name" value="GlycoTrans_28_N"/>
</dbReference>
<dbReference type="NCBIfam" id="TIGR01133">
    <property type="entry name" value="murG"/>
    <property type="match status" value="1"/>
</dbReference>
<dbReference type="PANTHER" id="PTHR21015:SF22">
    <property type="entry name" value="GLYCOSYLTRANSFERASE"/>
    <property type="match status" value="1"/>
</dbReference>
<dbReference type="PANTHER" id="PTHR21015">
    <property type="entry name" value="UDP-N-ACETYLGLUCOSAMINE--N-ACETYLMURAMYL-(PENTAPEPTIDE) PYROPHOSPHORYL-UNDECAPRENOL N-ACETYLGLUCOSAMINE TRANSFERASE 1"/>
    <property type="match status" value="1"/>
</dbReference>
<dbReference type="Pfam" id="PF04101">
    <property type="entry name" value="Glyco_tran_28_C"/>
    <property type="match status" value="1"/>
</dbReference>
<dbReference type="Pfam" id="PF03033">
    <property type="entry name" value="Glyco_transf_28"/>
    <property type="match status" value="1"/>
</dbReference>
<dbReference type="SUPFAM" id="SSF53756">
    <property type="entry name" value="UDP-Glycosyltransferase/glycogen phosphorylase"/>
    <property type="match status" value="1"/>
</dbReference>
<organism>
    <name type="scientific">Herminiimonas arsenicoxydans</name>
    <dbReference type="NCBI Taxonomy" id="204773"/>
    <lineage>
        <taxon>Bacteria</taxon>
        <taxon>Pseudomonadati</taxon>
        <taxon>Pseudomonadota</taxon>
        <taxon>Betaproteobacteria</taxon>
        <taxon>Burkholderiales</taxon>
        <taxon>Oxalobacteraceae</taxon>
        <taxon>Herminiimonas</taxon>
    </lineage>
</organism>
<name>MURG_HERAR</name>
<accession>A4G8T8</accession>
<keyword id="KW-0131">Cell cycle</keyword>
<keyword id="KW-0132">Cell division</keyword>
<keyword id="KW-0997">Cell inner membrane</keyword>
<keyword id="KW-1003">Cell membrane</keyword>
<keyword id="KW-0133">Cell shape</keyword>
<keyword id="KW-0961">Cell wall biogenesis/degradation</keyword>
<keyword id="KW-0328">Glycosyltransferase</keyword>
<keyword id="KW-0472">Membrane</keyword>
<keyword id="KW-0573">Peptidoglycan synthesis</keyword>
<keyword id="KW-1185">Reference proteome</keyword>
<keyword id="KW-0808">Transferase</keyword>
<gene>
    <name evidence="1" type="primary">murG</name>
    <name type="ordered locus">HEAR2811</name>
</gene>
<feature type="chain" id="PRO_0000315102" description="UDP-N-acetylglucosamine--N-acetylmuramyl-(pentapeptide) pyrophosphoryl-undecaprenol N-acetylglucosamine transferase">
    <location>
        <begin position="1"/>
        <end position="358"/>
    </location>
</feature>
<feature type="binding site" evidence="1">
    <location>
        <begin position="11"/>
        <end position="13"/>
    </location>
    <ligand>
        <name>UDP-N-acetyl-alpha-D-glucosamine</name>
        <dbReference type="ChEBI" id="CHEBI:57705"/>
    </ligand>
</feature>
<feature type="binding site" evidence="1">
    <location>
        <position position="163"/>
    </location>
    <ligand>
        <name>UDP-N-acetyl-alpha-D-glucosamine</name>
        <dbReference type="ChEBI" id="CHEBI:57705"/>
    </ligand>
</feature>
<feature type="binding site" evidence="1">
    <location>
        <position position="191"/>
    </location>
    <ligand>
        <name>UDP-N-acetyl-alpha-D-glucosamine</name>
        <dbReference type="ChEBI" id="CHEBI:57705"/>
    </ligand>
</feature>
<feature type="binding site" evidence="1">
    <location>
        <position position="245"/>
    </location>
    <ligand>
        <name>UDP-N-acetyl-alpha-D-glucosamine</name>
        <dbReference type="ChEBI" id="CHEBI:57705"/>
    </ligand>
</feature>
<feature type="binding site" evidence="1">
    <location>
        <position position="290"/>
    </location>
    <ligand>
        <name>UDP-N-acetyl-alpha-D-glucosamine</name>
        <dbReference type="ChEBI" id="CHEBI:57705"/>
    </ligand>
</feature>